<keyword id="KW-0963">Cytoplasm</keyword>
<keyword id="KW-0479">Metal-binding</keyword>
<keyword id="KW-0520">NAD</keyword>
<keyword id="KW-1185">Reference proteome</keyword>
<keyword id="KW-0804">Transcription</keyword>
<keyword id="KW-0805">Transcription regulation</keyword>
<keyword id="KW-0808">Transferase</keyword>
<keyword id="KW-0862">Zinc</keyword>
<evidence type="ECO:0000255" key="1">
    <source>
        <dbReference type="HAMAP-Rule" id="MF_01968"/>
    </source>
</evidence>
<evidence type="ECO:0000255" key="2">
    <source>
        <dbReference type="PROSITE-ProRule" id="PRU00236"/>
    </source>
</evidence>
<name>NPD_HALMA</name>
<feature type="chain" id="PRO_0000110379" description="NAD-dependent protein deacetylase">
    <location>
        <begin position="1"/>
        <end position="260"/>
    </location>
</feature>
<feature type="domain" description="Deacetylase sirtuin-type" evidence="2">
    <location>
        <begin position="9"/>
        <end position="260"/>
    </location>
</feature>
<feature type="active site" description="Proton acceptor" evidence="2">
    <location>
        <position position="132"/>
    </location>
</feature>
<feature type="binding site" evidence="1">
    <location>
        <position position="35"/>
    </location>
    <ligand>
        <name>NAD(+)</name>
        <dbReference type="ChEBI" id="CHEBI:57540"/>
    </ligand>
</feature>
<feature type="binding site" evidence="1">
    <location>
        <position position="39"/>
    </location>
    <ligand>
        <name>NAD(+)</name>
        <dbReference type="ChEBI" id="CHEBI:57540"/>
    </ligand>
</feature>
<feature type="binding site" evidence="1">
    <location>
        <position position="46"/>
    </location>
    <ligand>
        <name>NAD(+)</name>
        <dbReference type="ChEBI" id="CHEBI:57540"/>
    </ligand>
</feature>
<feature type="binding site" evidence="1">
    <location>
        <position position="46"/>
    </location>
    <ligand>
        <name>nicotinamide</name>
        <dbReference type="ChEBI" id="CHEBI:17154"/>
    </ligand>
</feature>
<feature type="binding site" evidence="1">
    <location>
        <position position="47"/>
    </location>
    <ligand>
        <name>NAD(+)</name>
        <dbReference type="ChEBI" id="CHEBI:57540"/>
    </ligand>
</feature>
<feature type="binding site" evidence="1">
    <location>
        <position position="114"/>
    </location>
    <ligand>
        <name>NAD(+)</name>
        <dbReference type="ChEBI" id="CHEBI:57540"/>
    </ligand>
</feature>
<feature type="binding site" evidence="1">
    <location>
        <position position="116"/>
    </location>
    <ligand>
        <name>NAD(+)</name>
        <dbReference type="ChEBI" id="CHEBI:57540"/>
    </ligand>
</feature>
<feature type="binding site" evidence="1">
    <location>
        <position position="116"/>
    </location>
    <ligand>
        <name>nicotinamide</name>
        <dbReference type="ChEBI" id="CHEBI:17154"/>
    </ligand>
</feature>
<feature type="binding site" evidence="1">
    <location>
        <position position="117"/>
    </location>
    <ligand>
        <name>NAD(+)</name>
        <dbReference type="ChEBI" id="CHEBI:57540"/>
    </ligand>
</feature>
<feature type="binding site" evidence="1">
    <location>
        <position position="117"/>
    </location>
    <ligand>
        <name>nicotinamide</name>
        <dbReference type="ChEBI" id="CHEBI:17154"/>
    </ligand>
</feature>
<feature type="binding site" evidence="1">
    <location>
        <position position="132"/>
    </location>
    <ligand>
        <name>NAD(+)</name>
        <dbReference type="ChEBI" id="CHEBI:57540"/>
    </ligand>
</feature>
<feature type="binding site" evidence="1">
    <location>
        <position position="140"/>
    </location>
    <ligand>
        <name>Zn(2+)</name>
        <dbReference type="ChEBI" id="CHEBI:29105"/>
    </ligand>
</feature>
<feature type="binding site" evidence="1">
    <location>
        <position position="143"/>
    </location>
    <ligand>
        <name>Zn(2+)</name>
        <dbReference type="ChEBI" id="CHEBI:29105"/>
    </ligand>
</feature>
<feature type="binding site" evidence="1">
    <location>
        <position position="166"/>
    </location>
    <ligand>
        <name>Zn(2+)</name>
        <dbReference type="ChEBI" id="CHEBI:29105"/>
    </ligand>
</feature>
<feature type="binding site" evidence="1">
    <location>
        <position position="168"/>
    </location>
    <ligand>
        <name>Zn(2+)</name>
        <dbReference type="ChEBI" id="CHEBI:29105"/>
    </ligand>
</feature>
<feature type="binding site" evidence="1">
    <location>
        <position position="206"/>
    </location>
    <ligand>
        <name>NAD(+)</name>
        <dbReference type="ChEBI" id="CHEBI:57540"/>
    </ligand>
</feature>
<feature type="binding site" evidence="1">
    <location>
        <position position="207"/>
    </location>
    <ligand>
        <name>NAD(+)</name>
        <dbReference type="ChEBI" id="CHEBI:57540"/>
    </ligand>
</feature>
<feature type="binding site" evidence="1">
    <location>
        <position position="231"/>
    </location>
    <ligand>
        <name>NAD(+)</name>
        <dbReference type="ChEBI" id="CHEBI:57540"/>
    </ligand>
</feature>
<feature type="binding site" evidence="1">
    <location>
        <position position="248"/>
    </location>
    <ligand>
        <name>NAD(+)</name>
        <dbReference type="ChEBI" id="CHEBI:57540"/>
    </ligand>
</feature>
<feature type="binding site" evidence="1">
    <location>
        <position position="249"/>
    </location>
    <ligand>
        <name>NAD(+)</name>
        <dbReference type="ChEBI" id="CHEBI:57540"/>
    </ligand>
</feature>
<proteinExistence type="inferred from homology"/>
<protein>
    <recommendedName>
        <fullName evidence="1">NAD-dependent protein deacetylase</fullName>
        <ecNumber evidence="1 2">2.3.1.286</ecNumber>
    </recommendedName>
    <alternativeName>
        <fullName evidence="1">Regulatory protein SIR2 homolog</fullName>
    </alternativeName>
</protein>
<dbReference type="EC" id="2.3.1.286" evidence="1 2"/>
<dbReference type="EMBL" id="AY596297">
    <property type="protein sequence ID" value="AAV45497.1"/>
    <property type="molecule type" value="Genomic_DNA"/>
</dbReference>
<dbReference type="RefSeq" id="WP_011223041.1">
    <property type="nucleotide sequence ID" value="NC_006396.1"/>
</dbReference>
<dbReference type="SMR" id="Q5V4Q5"/>
<dbReference type="STRING" id="272569.rrnAC0470"/>
<dbReference type="PaxDb" id="272569-rrnAC0470"/>
<dbReference type="EnsemblBacteria" id="AAV45497">
    <property type="protein sequence ID" value="AAV45497"/>
    <property type="gene ID" value="rrnAC0470"/>
</dbReference>
<dbReference type="GeneID" id="40151537"/>
<dbReference type="KEGG" id="hma:rrnAC0470"/>
<dbReference type="PATRIC" id="fig|272569.17.peg.1240"/>
<dbReference type="eggNOG" id="arCOG04248">
    <property type="taxonomic scope" value="Archaea"/>
</dbReference>
<dbReference type="HOGENOM" id="CLU_023643_3_1_2"/>
<dbReference type="Proteomes" id="UP000001169">
    <property type="component" value="Chromosome I"/>
</dbReference>
<dbReference type="GO" id="GO:0005737">
    <property type="term" value="C:cytoplasm"/>
    <property type="evidence" value="ECO:0007669"/>
    <property type="project" value="UniProtKB-SubCell"/>
</dbReference>
<dbReference type="GO" id="GO:0017136">
    <property type="term" value="F:histone deacetylase activity, NAD-dependent"/>
    <property type="evidence" value="ECO:0007669"/>
    <property type="project" value="TreeGrafter"/>
</dbReference>
<dbReference type="GO" id="GO:0070403">
    <property type="term" value="F:NAD+ binding"/>
    <property type="evidence" value="ECO:0007669"/>
    <property type="project" value="UniProtKB-UniRule"/>
</dbReference>
<dbReference type="GO" id="GO:0008270">
    <property type="term" value="F:zinc ion binding"/>
    <property type="evidence" value="ECO:0007669"/>
    <property type="project" value="UniProtKB-UniRule"/>
</dbReference>
<dbReference type="Gene3D" id="3.30.1600.10">
    <property type="entry name" value="SIR2/SIRT2 'Small Domain"/>
    <property type="match status" value="1"/>
</dbReference>
<dbReference type="Gene3D" id="3.40.50.1220">
    <property type="entry name" value="TPP-binding domain"/>
    <property type="match status" value="1"/>
</dbReference>
<dbReference type="HAMAP" id="MF_01968">
    <property type="entry name" value="Sirtuin_ClassU"/>
    <property type="match status" value="1"/>
</dbReference>
<dbReference type="InterPro" id="IPR029035">
    <property type="entry name" value="DHS-like_NAD/FAD-binding_dom"/>
</dbReference>
<dbReference type="InterPro" id="IPR050134">
    <property type="entry name" value="NAD-dep_sirtuin_deacylases"/>
</dbReference>
<dbReference type="InterPro" id="IPR003000">
    <property type="entry name" value="Sirtuin"/>
</dbReference>
<dbReference type="InterPro" id="IPR026591">
    <property type="entry name" value="Sirtuin_cat_small_dom_sf"/>
</dbReference>
<dbReference type="InterPro" id="IPR028628">
    <property type="entry name" value="Sirtuin_class_U"/>
</dbReference>
<dbReference type="InterPro" id="IPR026590">
    <property type="entry name" value="Ssirtuin_cat_dom"/>
</dbReference>
<dbReference type="NCBIfam" id="NF001753">
    <property type="entry name" value="PRK00481.1-3"/>
    <property type="match status" value="1"/>
</dbReference>
<dbReference type="PANTHER" id="PTHR11085:SF11">
    <property type="entry name" value="NAD-DEPENDENT PROTEIN DEACETYLASE"/>
    <property type="match status" value="1"/>
</dbReference>
<dbReference type="PANTHER" id="PTHR11085">
    <property type="entry name" value="NAD-DEPENDENT PROTEIN DEACYLASE SIRTUIN-5, MITOCHONDRIAL-RELATED"/>
    <property type="match status" value="1"/>
</dbReference>
<dbReference type="Pfam" id="PF02146">
    <property type="entry name" value="SIR2"/>
    <property type="match status" value="1"/>
</dbReference>
<dbReference type="SUPFAM" id="SSF52467">
    <property type="entry name" value="DHS-like NAD/FAD-binding domain"/>
    <property type="match status" value="1"/>
</dbReference>
<dbReference type="PROSITE" id="PS50305">
    <property type="entry name" value="SIRTUIN"/>
    <property type="match status" value="1"/>
</dbReference>
<comment type="function">
    <text evidence="1">NAD-dependent protein deacetylase which modulates the activities of several enzymes which are inactive in their acetylated form. Deacetylates the N-terminal lysine residue of Alba, the major archaeal chromatin protein and that, in turn, increases Alba's DNA binding affinity, thereby repressing transcription.</text>
</comment>
<comment type="catalytic activity">
    <reaction evidence="1">
        <text>N(6)-acetyl-L-lysyl-[protein] + NAD(+) + H2O = 2''-O-acetyl-ADP-D-ribose + nicotinamide + L-lysyl-[protein]</text>
        <dbReference type="Rhea" id="RHEA:43636"/>
        <dbReference type="Rhea" id="RHEA-COMP:9752"/>
        <dbReference type="Rhea" id="RHEA-COMP:10731"/>
        <dbReference type="ChEBI" id="CHEBI:15377"/>
        <dbReference type="ChEBI" id="CHEBI:17154"/>
        <dbReference type="ChEBI" id="CHEBI:29969"/>
        <dbReference type="ChEBI" id="CHEBI:57540"/>
        <dbReference type="ChEBI" id="CHEBI:61930"/>
        <dbReference type="ChEBI" id="CHEBI:83767"/>
        <dbReference type="EC" id="2.3.1.286"/>
    </reaction>
</comment>
<comment type="cofactor">
    <cofactor evidence="1">
        <name>Zn(2+)</name>
        <dbReference type="ChEBI" id="CHEBI:29105"/>
    </cofactor>
    <text evidence="1">Binds 1 zinc ion per subunit.</text>
</comment>
<comment type="subcellular location">
    <subcellularLocation>
        <location evidence="1">Cytoplasm</location>
    </subcellularLocation>
</comment>
<comment type="similarity">
    <text evidence="1">Belongs to the sirtuin family. Class U subfamily.</text>
</comment>
<accession>Q5V4Q5</accession>
<sequence length="260" mass="27842">MADDRHGIDDIDGETLDAVAEALRTAETAVALTGAGVSTASGIPSFRGDDGIWERHDPADFHRRRLDADPAGFWADRLSLREAIYGDIDPEPNAAHEALAALEADGHLDAVLTQNIDGLHDAAGTDRVVELHGTHRRVVCDDCGHRRDAEVVFEQAAESSDLPPRCDCGGVYRPDVVLFGEPMPDVAMNEAQRLARDSDVFLAVGSSLSVQPASLLPKIAAEGDSTLVVVNYEETPRDASAAHVLRADVTQVLPAIVERL</sequence>
<organism>
    <name type="scientific">Haloarcula marismortui (strain ATCC 43049 / DSM 3752 / JCM 8966 / VKM B-1809)</name>
    <name type="common">Halobacterium marismortui</name>
    <dbReference type="NCBI Taxonomy" id="272569"/>
    <lineage>
        <taxon>Archaea</taxon>
        <taxon>Methanobacteriati</taxon>
        <taxon>Methanobacteriota</taxon>
        <taxon>Stenosarchaea group</taxon>
        <taxon>Halobacteria</taxon>
        <taxon>Halobacteriales</taxon>
        <taxon>Haloarculaceae</taxon>
        <taxon>Haloarcula</taxon>
    </lineage>
</organism>
<reference key="1">
    <citation type="journal article" date="2004" name="Genome Res.">
        <title>Genome sequence of Haloarcula marismortui: a halophilic archaeon from the Dead Sea.</title>
        <authorList>
            <person name="Baliga N.S."/>
            <person name="Bonneau R."/>
            <person name="Facciotti M.T."/>
            <person name="Pan M."/>
            <person name="Glusman G."/>
            <person name="Deutsch E.W."/>
            <person name="Shannon P."/>
            <person name="Chiu Y."/>
            <person name="Weng R.S."/>
            <person name="Gan R.R."/>
            <person name="Hung P."/>
            <person name="Date S.V."/>
            <person name="Marcotte E."/>
            <person name="Hood L."/>
            <person name="Ng W.V."/>
        </authorList>
    </citation>
    <scope>NUCLEOTIDE SEQUENCE [LARGE SCALE GENOMIC DNA]</scope>
    <source>
        <strain>ATCC 43049 / DSM 3752 / JCM 8966 / VKM B-1809</strain>
    </source>
</reference>
<gene>
    <name evidence="1" type="primary">cobB</name>
    <name type="synonym">sir2</name>
    <name type="ordered locus">rrnAC0470</name>
</gene>